<keyword id="KW-0028">Amino-acid biosynthesis</keyword>
<keyword id="KW-0057">Aromatic amino acid biosynthesis</keyword>
<keyword id="KW-0210">Decarboxylase</keyword>
<keyword id="KW-0456">Lyase</keyword>
<keyword id="KW-0822">Tryptophan biosynthesis</keyword>
<organism>
    <name type="scientific">Bacillus cereus (strain AH820)</name>
    <dbReference type="NCBI Taxonomy" id="405535"/>
    <lineage>
        <taxon>Bacteria</taxon>
        <taxon>Bacillati</taxon>
        <taxon>Bacillota</taxon>
        <taxon>Bacilli</taxon>
        <taxon>Bacillales</taxon>
        <taxon>Bacillaceae</taxon>
        <taxon>Bacillus</taxon>
        <taxon>Bacillus cereus group</taxon>
    </lineage>
</organism>
<gene>
    <name evidence="1" type="primary">trpC</name>
    <name type="ordered locus">BCAH820_1319</name>
</gene>
<name>TRPC_BACC0</name>
<accession>B7JES8</accession>
<dbReference type="EC" id="4.1.1.48" evidence="1"/>
<dbReference type="EMBL" id="CP001283">
    <property type="protein sequence ID" value="ACK89978.1"/>
    <property type="molecule type" value="Genomic_DNA"/>
</dbReference>
<dbReference type="RefSeq" id="WP_000536721.1">
    <property type="nucleotide sequence ID" value="NC_011773.1"/>
</dbReference>
<dbReference type="SMR" id="B7JES8"/>
<dbReference type="GeneID" id="45021251"/>
<dbReference type="KEGG" id="bcu:BCAH820_1319"/>
<dbReference type="HOGENOM" id="CLU_034247_2_0_9"/>
<dbReference type="UniPathway" id="UPA00035">
    <property type="reaction ID" value="UER00043"/>
</dbReference>
<dbReference type="Proteomes" id="UP000001363">
    <property type="component" value="Chromosome"/>
</dbReference>
<dbReference type="GO" id="GO:0004425">
    <property type="term" value="F:indole-3-glycerol-phosphate synthase activity"/>
    <property type="evidence" value="ECO:0007669"/>
    <property type="project" value="UniProtKB-UniRule"/>
</dbReference>
<dbReference type="GO" id="GO:0004640">
    <property type="term" value="F:phosphoribosylanthranilate isomerase activity"/>
    <property type="evidence" value="ECO:0007669"/>
    <property type="project" value="TreeGrafter"/>
</dbReference>
<dbReference type="GO" id="GO:0000162">
    <property type="term" value="P:L-tryptophan biosynthetic process"/>
    <property type="evidence" value="ECO:0007669"/>
    <property type="project" value="UniProtKB-UniRule"/>
</dbReference>
<dbReference type="CDD" id="cd00331">
    <property type="entry name" value="IGPS"/>
    <property type="match status" value="1"/>
</dbReference>
<dbReference type="FunFam" id="3.20.20.70:FF:000024">
    <property type="entry name" value="Indole-3-glycerol phosphate synthase"/>
    <property type="match status" value="1"/>
</dbReference>
<dbReference type="Gene3D" id="3.20.20.70">
    <property type="entry name" value="Aldolase class I"/>
    <property type="match status" value="1"/>
</dbReference>
<dbReference type="HAMAP" id="MF_00134_B">
    <property type="entry name" value="IGPS_B"/>
    <property type="match status" value="1"/>
</dbReference>
<dbReference type="InterPro" id="IPR013785">
    <property type="entry name" value="Aldolase_TIM"/>
</dbReference>
<dbReference type="InterPro" id="IPR045186">
    <property type="entry name" value="Indole-3-glycerol_P_synth"/>
</dbReference>
<dbReference type="InterPro" id="IPR013798">
    <property type="entry name" value="Indole-3-glycerol_P_synth_dom"/>
</dbReference>
<dbReference type="InterPro" id="IPR001468">
    <property type="entry name" value="Indole-3-GlycerolPSynthase_CS"/>
</dbReference>
<dbReference type="InterPro" id="IPR011060">
    <property type="entry name" value="RibuloseP-bd_barrel"/>
</dbReference>
<dbReference type="NCBIfam" id="NF001371">
    <property type="entry name" value="PRK00278.1-3"/>
    <property type="match status" value="1"/>
</dbReference>
<dbReference type="NCBIfam" id="NF001377">
    <property type="entry name" value="PRK00278.2-4"/>
    <property type="match status" value="1"/>
</dbReference>
<dbReference type="PANTHER" id="PTHR22854:SF2">
    <property type="entry name" value="INDOLE-3-GLYCEROL-PHOSPHATE SYNTHASE"/>
    <property type="match status" value="1"/>
</dbReference>
<dbReference type="PANTHER" id="PTHR22854">
    <property type="entry name" value="TRYPTOPHAN BIOSYNTHESIS PROTEIN"/>
    <property type="match status" value="1"/>
</dbReference>
<dbReference type="Pfam" id="PF00218">
    <property type="entry name" value="IGPS"/>
    <property type="match status" value="1"/>
</dbReference>
<dbReference type="SUPFAM" id="SSF51366">
    <property type="entry name" value="Ribulose-phoshate binding barrel"/>
    <property type="match status" value="1"/>
</dbReference>
<dbReference type="PROSITE" id="PS00614">
    <property type="entry name" value="IGPS"/>
    <property type="match status" value="1"/>
</dbReference>
<feature type="chain" id="PRO_1000117768" description="Indole-3-glycerol phosphate synthase">
    <location>
        <begin position="1"/>
        <end position="253"/>
    </location>
</feature>
<protein>
    <recommendedName>
        <fullName evidence="1">Indole-3-glycerol phosphate synthase</fullName>
        <shortName evidence="1">IGPS</shortName>
        <ecNumber evidence="1">4.1.1.48</ecNumber>
    </recommendedName>
</protein>
<proteinExistence type="inferred from homology"/>
<comment type="catalytic activity">
    <reaction evidence="1">
        <text>1-(2-carboxyphenylamino)-1-deoxy-D-ribulose 5-phosphate + H(+) = (1S,2R)-1-C-(indol-3-yl)glycerol 3-phosphate + CO2 + H2O</text>
        <dbReference type="Rhea" id="RHEA:23476"/>
        <dbReference type="ChEBI" id="CHEBI:15377"/>
        <dbReference type="ChEBI" id="CHEBI:15378"/>
        <dbReference type="ChEBI" id="CHEBI:16526"/>
        <dbReference type="ChEBI" id="CHEBI:58613"/>
        <dbReference type="ChEBI" id="CHEBI:58866"/>
        <dbReference type="EC" id="4.1.1.48"/>
    </reaction>
</comment>
<comment type="pathway">
    <text evidence="1">Amino-acid biosynthesis; L-tryptophan biosynthesis; L-tryptophan from chorismate: step 4/5.</text>
</comment>
<comment type="similarity">
    <text evidence="1">Belongs to the TrpC family.</text>
</comment>
<evidence type="ECO:0000255" key="1">
    <source>
        <dbReference type="HAMAP-Rule" id="MF_00134"/>
    </source>
</evidence>
<sequence length="253" mass="28437">MGTILDKIVNQKKKEVAALYETYTPVKEKRKTRSLVKALEQFTVIAEVKRASPSKGDINLHVDVRKQVKTYEECGAGAVSVLTDGQFFKGSFYDLQTAREESSIPLLCKDFIIDKIQIDRAYEAGADIILLIVAALTKEKLKELYSYVLEKGLEAIVEVHDEQELEIAIQLNPHVIGINNRNLKTFEVDLSQTEKLGKRLNEEKLLWISESGIHSKEDIIRVKRAGAKGVLVGEALMTSSSIHTFFEDCKVNI</sequence>
<reference key="1">
    <citation type="submission" date="2008-10" db="EMBL/GenBank/DDBJ databases">
        <title>Genome sequence of Bacillus cereus AH820.</title>
        <authorList>
            <person name="Dodson R.J."/>
            <person name="Durkin A.S."/>
            <person name="Rosovitz M.J."/>
            <person name="Rasko D.A."/>
            <person name="Hoffmaster A."/>
            <person name="Ravel J."/>
            <person name="Sutton G."/>
        </authorList>
    </citation>
    <scope>NUCLEOTIDE SEQUENCE [LARGE SCALE GENOMIC DNA]</scope>
    <source>
        <strain>AH820</strain>
    </source>
</reference>